<sequence>MGLSDGEWQLVLNAWGKVEADVAGHGQEVLIRLFTGHPETLEKFDKFKHLKTEAEMKASEDLKKHGNTVLTALGGILKKKGHHEAEVKHLAESHANKHKIPVKYLEFISDAIIHVLHAKHPSDFGADAQGAMSKALELFRNDMAAQYKVLGFQG</sequence>
<organism>
    <name type="scientific">Ovis aries</name>
    <name type="common">Sheep</name>
    <dbReference type="NCBI Taxonomy" id="9940"/>
    <lineage>
        <taxon>Eukaryota</taxon>
        <taxon>Metazoa</taxon>
        <taxon>Chordata</taxon>
        <taxon>Craniata</taxon>
        <taxon>Vertebrata</taxon>
        <taxon>Euteleostomi</taxon>
        <taxon>Mammalia</taxon>
        <taxon>Eutheria</taxon>
        <taxon>Laurasiatheria</taxon>
        <taxon>Artiodactyla</taxon>
        <taxon>Ruminantia</taxon>
        <taxon>Pecora</taxon>
        <taxon>Bovidae</taxon>
        <taxon>Caprinae</taxon>
        <taxon>Ovis</taxon>
    </lineage>
</organism>
<protein>
    <recommendedName>
        <fullName>Myoglobin</fullName>
    </recommendedName>
    <alternativeName>
        <fullName evidence="1">Nitrite reductase MB</fullName>
        <ecNumber evidence="1">1.7.-.-</ecNumber>
    </alternativeName>
    <alternativeName>
        <fullName evidence="1">Pseudoperoxidase MB</fullName>
        <ecNumber evidence="1">1.11.1.-</ecNumber>
    </alternativeName>
</protein>
<reference key="1">
    <citation type="submission" date="2006-09" db="EMBL/GenBank/DDBJ databases">
        <title>Cloning and characterization of myoglobin cDNA from Ovis aries.</title>
        <authorList>
            <person name="Deng H."/>
            <person name="Zheng Y."/>
        </authorList>
    </citation>
    <scope>NUCLEOTIDE SEQUENCE [MRNA]</scope>
    <source>
        <tissue>Heart</tissue>
    </source>
</reference>
<reference key="2">
    <citation type="journal article" date="1972" name="Eur. J. Biochem.">
        <title>The covalent structure of sheep-heart myoglobin.</title>
        <authorList>
            <person name="Han K."/>
            <person name="Tetaert D."/>
            <person name="Moschetto Y."/>
            <person name="Dautrevaux M."/>
            <person name="Kopeyan C."/>
        </authorList>
    </citation>
    <scope>PROTEIN SEQUENCE OF 2-154</scope>
    <source>
        <tissue>Heart muscle</tissue>
    </source>
</reference>
<reference key="3">
    <citation type="submission" date="1972-11" db="PIR data bank">
        <authorList>
            <person name="Han K."/>
        </authorList>
    </citation>
    <scope>SEQUENCE REVISION TO 100-102</scope>
</reference>
<reference key="4">
    <citation type="journal article" date="1975" name="J. Mol. Evol.">
        <title>The amino acid sequence of myoglobin from skeletal muscles of red deer (Cervus elaphus).</title>
        <authorList>
            <person name="Votsch W."/>
            <person name="Anderer F.A."/>
        </authorList>
    </citation>
    <scope>PROTEIN SEQUENCE OF 141-154</scope>
</reference>
<name>MYG_SHEEP</name>
<evidence type="ECO:0000250" key="1">
    <source>
        <dbReference type="UniProtKB" id="P02144"/>
    </source>
</evidence>
<evidence type="ECO:0000250" key="2">
    <source>
        <dbReference type="UniProtKB" id="P02185"/>
    </source>
</evidence>
<evidence type="ECO:0000250" key="3">
    <source>
        <dbReference type="UniProtKB" id="P02189"/>
    </source>
</evidence>
<evidence type="ECO:0000250" key="4">
    <source>
        <dbReference type="UniProtKB" id="P04247"/>
    </source>
</evidence>
<evidence type="ECO:0000250" key="5">
    <source>
        <dbReference type="UniProtKB" id="P68082"/>
    </source>
</evidence>
<evidence type="ECO:0000250" key="6">
    <source>
        <dbReference type="UniProtKB" id="Q9QZ76"/>
    </source>
</evidence>
<evidence type="ECO:0000255" key="7">
    <source>
        <dbReference type="PROSITE-ProRule" id="PRU00238"/>
    </source>
</evidence>
<evidence type="ECO:0000269" key="8">
    <source>
    </source>
</evidence>
<evidence type="ECO:0000305" key="9"/>
<feature type="initiator methionine" description="Removed" evidence="8">
    <location>
        <position position="1"/>
    </location>
</feature>
<feature type="chain" id="PRO_0000053344" description="Myoglobin">
    <location>
        <begin position="2"/>
        <end position="154"/>
    </location>
</feature>
<feature type="domain" description="Globin" evidence="7">
    <location>
        <begin position="2"/>
        <end position="148"/>
    </location>
</feature>
<feature type="binding site" evidence="5">
    <location>
        <position position="65"/>
    </location>
    <ligand>
        <name>nitrite</name>
        <dbReference type="ChEBI" id="CHEBI:16301"/>
    </ligand>
</feature>
<feature type="binding site" evidence="3 7">
    <location>
        <position position="65"/>
    </location>
    <ligand>
        <name>O2</name>
        <dbReference type="ChEBI" id="CHEBI:15379"/>
    </ligand>
</feature>
<feature type="binding site" description="proximal binding residue" evidence="1">
    <location>
        <position position="94"/>
    </location>
    <ligand>
        <name>heme b</name>
        <dbReference type="ChEBI" id="CHEBI:60344"/>
    </ligand>
    <ligandPart>
        <name>Fe</name>
        <dbReference type="ChEBI" id="CHEBI:18248"/>
    </ligandPart>
</feature>
<feature type="modified residue" description="Phosphoserine" evidence="6">
    <location>
        <position position="4"/>
    </location>
</feature>
<feature type="modified residue" description="Phosphothreonine" evidence="4">
    <location>
        <position position="68"/>
    </location>
</feature>
<feature type="sequence conflict" description="In Ref. 1; ABJ97274." evidence="9" ref="1">
    <original>D</original>
    <variation>G</variation>
    <location>
        <position position="21"/>
    </location>
</feature>
<feature type="sequence conflict" description="In Ref. 1; ABJ97274." evidence="9" ref="1">
    <original>K</original>
    <variation>E</variation>
    <location>
        <position position="78"/>
    </location>
</feature>
<feature type="sequence conflict" description="In Ref. 2; AA sequence." evidence="9" ref="2">
    <original>D</original>
    <variation>N</variation>
    <location>
        <position position="123"/>
    </location>
</feature>
<feature type="sequence conflict" description="In Ref. 2; AA sequence." evidence="9" ref="2">
    <original>Q</original>
    <variation>E</variation>
    <location>
        <position position="146"/>
    </location>
</feature>
<dbReference type="EC" id="1.7.-.-" evidence="1"/>
<dbReference type="EC" id="1.11.1.-" evidence="1"/>
<dbReference type="EMBL" id="DQ995220">
    <property type="protein sequence ID" value="ABJ97274.1"/>
    <property type="molecule type" value="mRNA"/>
</dbReference>
<dbReference type="PIR" id="A91195">
    <property type="entry name" value="MYSH"/>
</dbReference>
<dbReference type="RefSeq" id="NP_001072126.1">
    <property type="nucleotide sequence ID" value="NM_001078658.1"/>
</dbReference>
<dbReference type="RefSeq" id="XP_012015345.1">
    <property type="nucleotide sequence ID" value="XM_012159955.4"/>
</dbReference>
<dbReference type="RefSeq" id="XP_027821576.1">
    <property type="nucleotide sequence ID" value="XM_027965775.2"/>
</dbReference>
<dbReference type="SMR" id="P02190"/>
<dbReference type="STRING" id="9940.ENSOARP00000020014"/>
<dbReference type="PaxDb" id="9940-ENSOARP00000020014"/>
<dbReference type="Ensembl" id="ENSOART00025005302">
    <property type="protein sequence ID" value="ENSOARP00025002445"/>
    <property type="gene ID" value="ENSOARG00025003280"/>
</dbReference>
<dbReference type="Ensembl" id="ENSOART00040037479">
    <property type="protein sequence ID" value="ENSOARP00040019080"/>
    <property type="gene ID" value="ENSOARG00040022588"/>
</dbReference>
<dbReference type="Ensembl" id="ENSOART00185008706">
    <property type="protein sequence ID" value="ENSOARP00185004301"/>
    <property type="gene ID" value="ENSOARG00185005404"/>
</dbReference>
<dbReference type="Ensembl" id="ENSOART00215086141">
    <property type="protein sequence ID" value="ENSOARP00215047210"/>
    <property type="gene ID" value="ENSOARG00215050829"/>
</dbReference>
<dbReference type="Ensembl" id="ENSOART00220005242">
    <property type="protein sequence ID" value="ENSOARP00220003611"/>
    <property type="gene ID" value="ENSOARG00220002881"/>
</dbReference>
<dbReference type="Ensembl" id="ENSOART00225089421">
    <property type="protein sequence ID" value="ENSOARP00225047278"/>
    <property type="gene ID" value="ENSOARG00225053618"/>
</dbReference>
<dbReference type="GeneID" id="780509"/>
<dbReference type="KEGG" id="oas:780509"/>
<dbReference type="CTD" id="4151"/>
<dbReference type="eggNOG" id="KOG3378">
    <property type="taxonomic scope" value="Eukaryota"/>
</dbReference>
<dbReference type="HOGENOM" id="CLU_003827_18_0_1"/>
<dbReference type="OMA" id="VIIRMFQ"/>
<dbReference type="OrthoDB" id="6344802at2759"/>
<dbReference type="Proteomes" id="UP000002356">
    <property type="component" value="Chromosome 3"/>
</dbReference>
<dbReference type="Bgee" id="ENSOARG00000018639">
    <property type="expression patterns" value="Expressed in longissimus thoracis muscle and 49 other cell types or tissues"/>
</dbReference>
<dbReference type="GO" id="GO:0070062">
    <property type="term" value="C:extracellular exosome"/>
    <property type="evidence" value="ECO:0007669"/>
    <property type="project" value="TreeGrafter"/>
</dbReference>
<dbReference type="GO" id="GO:0016528">
    <property type="term" value="C:sarcoplasm"/>
    <property type="evidence" value="ECO:0000250"/>
    <property type="project" value="UniProtKB"/>
</dbReference>
<dbReference type="GO" id="GO:0020037">
    <property type="term" value="F:heme binding"/>
    <property type="evidence" value="ECO:0007669"/>
    <property type="project" value="InterPro"/>
</dbReference>
<dbReference type="GO" id="GO:0046872">
    <property type="term" value="F:metal ion binding"/>
    <property type="evidence" value="ECO:0007669"/>
    <property type="project" value="UniProtKB-KW"/>
</dbReference>
<dbReference type="GO" id="GO:0098809">
    <property type="term" value="F:nitrite reductase activity"/>
    <property type="evidence" value="ECO:0000250"/>
    <property type="project" value="UniProtKB"/>
</dbReference>
<dbReference type="GO" id="GO:0019825">
    <property type="term" value="F:oxygen binding"/>
    <property type="evidence" value="ECO:0007669"/>
    <property type="project" value="InterPro"/>
</dbReference>
<dbReference type="GO" id="GO:0005344">
    <property type="term" value="F:oxygen carrier activity"/>
    <property type="evidence" value="ECO:0000250"/>
    <property type="project" value="UniProtKB"/>
</dbReference>
<dbReference type="GO" id="GO:0004601">
    <property type="term" value="F:peroxidase activity"/>
    <property type="evidence" value="ECO:0000250"/>
    <property type="project" value="UniProtKB"/>
</dbReference>
<dbReference type="GO" id="GO:0019430">
    <property type="term" value="P:removal of superoxide radicals"/>
    <property type="evidence" value="ECO:0000250"/>
    <property type="project" value="UniProtKB"/>
</dbReference>
<dbReference type="Gene3D" id="6.10.140.2100">
    <property type="match status" value="1"/>
</dbReference>
<dbReference type="Gene3D" id="6.10.140.2110">
    <property type="match status" value="1"/>
</dbReference>
<dbReference type="InterPro" id="IPR000971">
    <property type="entry name" value="Globin"/>
</dbReference>
<dbReference type="InterPro" id="IPR009050">
    <property type="entry name" value="Globin-like_sf"/>
</dbReference>
<dbReference type="InterPro" id="IPR002335">
    <property type="entry name" value="Myoglobin"/>
</dbReference>
<dbReference type="PANTHER" id="PTHR47132">
    <property type="entry name" value="MYOGLOBIN"/>
    <property type="match status" value="1"/>
</dbReference>
<dbReference type="PANTHER" id="PTHR47132:SF1">
    <property type="entry name" value="MYOGLOBIN"/>
    <property type="match status" value="1"/>
</dbReference>
<dbReference type="Pfam" id="PF00042">
    <property type="entry name" value="Globin"/>
    <property type="match status" value="1"/>
</dbReference>
<dbReference type="PRINTS" id="PR00613">
    <property type="entry name" value="MYOGLOBIN"/>
</dbReference>
<dbReference type="SUPFAM" id="SSF46458">
    <property type="entry name" value="Globin-like"/>
    <property type="match status" value="1"/>
</dbReference>
<dbReference type="PROSITE" id="PS01033">
    <property type="entry name" value="GLOBIN"/>
    <property type="match status" value="1"/>
</dbReference>
<gene>
    <name type="primary">MB</name>
</gene>
<accession>P02190</accession>
<accession>A0FH33</accession>
<proteinExistence type="evidence at protein level"/>
<keyword id="KW-0963">Cytoplasm</keyword>
<keyword id="KW-0903">Direct protein sequencing</keyword>
<keyword id="KW-0349">Heme</keyword>
<keyword id="KW-0408">Iron</keyword>
<keyword id="KW-0479">Metal-binding</keyword>
<keyword id="KW-0514">Muscle protein</keyword>
<keyword id="KW-0560">Oxidoreductase</keyword>
<keyword id="KW-0561">Oxygen transport</keyword>
<keyword id="KW-0597">Phosphoprotein</keyword>
<keyword id="KW-1185">Reference proteome</keyword>
<keyword id="KW-0813">Transport</keyword>
<comment type="function">
    <text evidence="1">Monomeric heme protein which primary function is to store oxygen and facilitate its diffusion within muscle tissues. Reversibly binds oxygen through a pentacoordinated heme iron and enables its timely and efficient release as needed during periods of heightened demand. Depending on the oxidative conditions of tissues and cells, and in addition to its ability to bind oxygen, it also has a nitrite reductase activity whereby it regulates the production of bioactive nitric oxide. Under stress conditions, like hypoxia and anoxia, it also protects cells against reactive oxygen species thanks to its pseudoperoxidase activity.</text>
</comment>
<comment type="catalytic activity">
    <reaction evidence="1">
        <text>Fe(III)-heme b-[protein] + nitric oxide + H2O = Fe(II)-heme b-[protein] + nitrite + 2 H(+)</text>
        <dbReference type="Rhea" id="RHEA:77711"/>
        <dbReference type="Rhea" id="RHEA-COMP:18975"/>
        <dbReference type="Rhea" id="RHEA-COMP:18976"/>
        <dbReference type="ChEBI" id="CHEBI:15377"/>
        <dbReference type="ChEBI" id="CHEBI:15378"/>
        <dbReference type="ChEBI" id="CHEBI:16301"/>
        <dbReference type="ChEBI" id="CHEBI:16480"/>
        <dbReference type="ChEBI" id="CHEBI:55376"/>
        <dbReference type="ChEBI" id="CHEBI:60344"/>
    </reaction>
    <physiologicalReaction direction="right-to-left" evidence="1">
        <dbReference type="Rhea" id="RHEA:77713"/>
    </physiologicalReaction>
</comment>
<comment type="catalytic activity">
    <reaction evidence="1">
        <text>H2O2 + AH2 = A + 2 H2O</text>
        <dbReference type="Rhea" id="RHEA:30275"/>
        <dbReference type="ChEBI" id="CHEBI:13193"/>
        <dbReference type="ChEBI" id="CHEBI:15377"/>
        <dbReference type="ChEBI" id="CHEBI:16240"/>
        <dbReference type="ChEBI" id="CHEBI:17499"/>
    </reaction>
</comment>
<comment type="subunit">
    <text evidence="2">Monomeric.</text>
</comment>
<comment type="subcellular location">
    <subcellularLocation>
        <location evidence="1">Cytoplasm</location>
        <location evidence="1">Sarcoplasm</location>
    </subcellularLocation>
</comment>
<comment type="similarity">
    <text evidence="7">Belongs to the globin family.</text>
</comment>